<organism>
    <name type="scientific">Loxodonta africana</name>
    <name type="common">African elephant</name>
    <dbReference type="NCBI Taxonomy" id="9785"/>
    <lineage>
        <taxon>Eukaryota</taxon>
        <taxon>Metazoa</taxon>
        <taxon>Chordata</taxon>
        <taxon>Craniata</taxon>
        <taxon>Vertebrata</taxon>
        <taxon>Euteleostomi</taxon>
        <taxon>Mammalia</taxon>
        <taxon>Eutheria</taxon>
        <taxon>Afrotheria</taxon>
        <taxon>Proboscidea</taxon>
        <taxon>Elephantidae</taxon>
        <taxon>Loxodonta</taxon>
    </lineage>
</organism>
<gene>
    <name type="primary">MET</name>
</gene>
<keyword id="KW-0067">ATP-binding</keyword>
<keyword id="KW-1015">Disulfide bond</keyword>
<keyword id="KW-0325">Glycoprotein</keyword>
<keyword id="KW-0418">Kinase</keyword>
<keyword id="KW-0472">Membrane</keyword>
<keyword id="KW-0547">Nucleotide-binding</keyword>
<keyword id="KW-0597">Phosphoprotein</keyword>
<keyword id="KW-0656">Proto-oncogene</keyword>
<keyword id="KW-0675">Receptor</keyword>
<keyword id="KW-1185">Reference proteome</keyword>
<keyword id="KW-0677">Repeat</keyword>
<keyword id="KW-0732">Signal</keyword>
<keyword id="KW-0808">Transferase</keyword>
<keyword id="KW-0812">Transmembrane</keyword>
<keyword id="KW-1133">Transmembrane helix</keyword>
<keyword id="KW-0829">Tyrosine-protein kinase</keyword>
<keyword id="KW-0832">Ubl conjugation</keyword>
<evidence type="ECO:0000250" key="1"/>
<evidence type="ECO:0000250" key="2">
    <source>
        <dbReference type="UniProtKB" id="P08581"/>
    </source>
</evidence>
<evidence type="ECO:0000250" key="3">
    <source>
        <dbReference type="UniProtKB" id="P16056"/>
    </source>
</evidence>
<evidence type="ECO:0000255" key="4"/>
<evidence type="ECO:0000255" key="5">
    <source>
        <dbReference type="PROSITE-ProRule" id="PRU00159"/>
    </source>
</evidence>
<evidence type="ECO:0000255" key="6">
    <source>
        <dbReference type="PROSITE-ProRule" id="PRU00352"/>
    </source>
</evidence>
<evidence type="ECO:0000255" key="7">
    <source>
        <dbReference type="PROSITE-ProRule" id="PRU10028"/>
    </source>
</evidence>
<accession>Q108U6</accession>
<dbReference type="EC" id="2.7.10.1"/>
<dbReference type="EMBL" id="DP000087">
    <property type="protein sequence ID" value="ABG66646.1"/>
    <property type="molecule type" value="Genomic_DNA"/>
</dbReference>
<dbReference type="RefSeq" id="XP_003407277.1">
    <property type="nucleotide sequence ID" value="XM_003407229.2"/>
</dbReference>
<dbReference type="RefSeq" id="XP_023400347.1">
    <property type="nucleotide sequence ID" value="XM_023544579.2"/>
</dbReference>
<dbReference type="SMR" id="Q108U6"/>
<dbReference type="FunCoup" id="Q108U6">
    <property type="interactions" value="19"/>
</dbReference>
<dbReference type="STRING" id="9785.ENSLAFP00000009780"/>
<dbReference type="GlyCosmos" id="Q108U6">
    <property type="glycosylation" value="13 sites, No reported glycans"/>
</dbReference>
<dbReference type="GeneID" id="100656285"/>
<dbReference type="eggNOG" id="KOG1095">
    <property type="taxonomic scope" value="Eukaryota"/>
</dbReference>
<dbReference type="eggNOG" id="KOG3610">
    <property type="taxonomic scope" value="Eukaryota"/>
</dbReference>
<dbReference type="HOGENOM" id="CLU_005158_0_0_1"/>
<dbReference type="InParanoid" id="Q108U6"/>
<dbReference type="Proteomes" id="UP000007646">
    <property type="component" value="Unassembled WGS sequence"/>
</dbReference>
<dbReference type="GO" id="GO:0005886">
    <property type="term" value="C:plasma membrane"/>
    <property type="evidence" value="ECO:0007669"/>
    <property type="project" value="TreeGrafter"/>
</dbReference>
<dbReference type="GO" id="GO:0002116">
    <property type="term" value="C:semaphorin receptor complex"/>
    <property type="evidence" value="ECO:0007669"/>
    <property type="project" value="TreeGrafter"/>
</dbReference>
<dbReference type="GO" id="GO:0005524">
    <property type="term" value="F:ATP binding"/>
    <property type="evidence" value="ECO:0007669"/>
    <property type="project" value="UniProtKB-KW"/>
</dbReference>
<dbReference type="GO" id="GO:0017154">
    <property type="term" value="F:semaphorin receptor activity"/>
    <property type="evidence" value="ECO:0007669"/>
    <property type="project" value="InterPro"/>
</dbReference>
<dbReference type="GO" id="GO:0004714">
    <property type="term" value="F:transmembrane receptor protein tyrosine kinase activity"/>
    <property type="evidence" value="ECO:0007669"/>
    <property type="project" value="UniProtKB-EC"/>
</dbReference>
<dbReference type="GO" id="GO:0007169">
    <property type="term" value="P:cell surface receptor protein tyrosine kinase signaling pathway"/>
    <property type="evidence" value="ECO:0007669"/>
    <property type="project" value="InterPro"/>
</dbReference>
<dbReference type="GO" id="GO:0050918">
    <property type="term" value="P:positive chemotaxis"/>
    <property type="evidence" value="ECO:0000250"/>
    <property type="project" value="UniProtKB"/>
</dbReference>
<dbReference type="GO" id="GO:2001028">
    <property type="term" value="P:positive regulation of endothelial cell chemotaxis"/>
    <property type="evidence" value="ECO:0000250"/>
    <property type="project" value="UniProtKB"/>
</dbReference>
<dbReference type="GO" id="GO:0071526">
    <property type="term" value="P:semaphorin-plexin signaling pathway"/>
    <property type="evidence" value="ECO:0000250"/>
    <property type="project" value="UniProtKB"/>
</dbReference>
<dbReference type="CDD" id="cd00603">
    <property type="entry name" value="IPT_PCSR"/>
    <property type="match status" value="1"/>
</dbReference>
<dbReference type="CDD" id="cd01180">
    <property type="entry name" value="IPT_plexin_repeat1"/>
    <property type="match status" value="1"/>
</dbReference>
<dbReference type="CDD" id="cd01179">
    <property type="entry name" value="IPT_plexin_repeat2"/>
    <property type="match status" value="1"/>
</dbReference>
<dbReference type="CDD" id="cd05058">
    <property type="entry name" value="PTKc_Met_Ron"/>
    <property type="match status" value="1"/>
</dbReference>
<dbReference type="FunFam" id="1.10.510.10:FF:000093">
    <property type="entry name" value="Hepatocyte growth factor receptor"/>
    <property type="match status" value="1"/>
</dbReference>
<dbReference type="FunFam" id="2.130.10.10:FF:000088">
    <property type="entry name" value="Hepatocyte growth factor receptor"/>
    <property type="match status" value="1"/>
</dbReference>
<dbReference type="FunFam" id="2.60.40.10:FF:000213">
    <property type="entry name" value="Hepatocyte growth factor receptor"/>
    <property type="match status" value="1"/>
</dbReference>
<dbReference type="FunFam" id="2.60.40.10:FF:000400">
    <property type="entry name" value="Hepatocyte growth factor receptor"/>
    <property type="match status" value="1"/>
</dbReference>
<dbReference type="FunFam" id="2.60.40.10:FF:002708">
    <property type="entry name" value="Hepatocyte growth factor receptor"/>
    <property type="match status" value="1"/>
</dbReference>
<dbReference type="FunFam" id="3.30.200.20:FF:000188">
    <property type="entry name" value="Hepatocyte growth factor receptor"/>
    <property type="match status" value="1"/>
</dbReference>
<dbReference type="Gene3D" id="2.60.40.10">
    <property type="entry name" value="Immunoglobulins"/>
    <property type="match status" value="3"/>
</dbReference>
<dbReference type="Gene3D" id="3.30.200.20">
    <property type="entry name" value="Phosphorylase Kinase, domain 1"/>
    <property type="match status" value="1"/>
</dbReference>
<dbReference type="Gene3D" id="1.10.510.10">
    <property type="entry name" value="Transferase(Phosphotransferase) domain 1"/>
    <property type="match status" value="1"/>
</dbReference>
<dbReference type="Gene3D" id="2.130.10.10">
    <property type="entry name" value="YVTN repeat-like/Quinoprotein amine dehydrogenase"/>
    <property type="match status" value="1"/>
</dbReference>
<dbReference type="InterPro" id="IPR013783">
    <property type="entry name" value="Ig-like_fold"/>
</dbReference>
<dbReference type="InterPro" id="IPR014756">
    <property type="entry name" value="Ig_E-set"/>
</dbReference>
<dbReference type="InterPro" id="IPR002909">
    <property type="entry name" value="IPT_dom"/>
</dbReference>
<dbReference type="InterPro" id="IPR011009">
    <property type="entry name" value="Kinase-like_dom_sf"/>
</dbReference>
<dbReference type="InterPro" id="IPR031148">
    <property type="entry name" value="Plexin"/>
</dbReference>
<dbReference type="InterPro" id="IPR002165">
    <property type="entry name" value="Plexin_repeat"/>
</dbReference>
<dbReference type="InterPro" id="IPR000719">
    <property type="entry name" value="Prot_kinase_dom"/>
</dbReference>
<dbReference type="InterPro" id="IPR017441">
    <property type="entry name" value="Protein_kinase_ATP_BS"/>
</dbReference>
<dbReference type="InterPro" id="IPR016201">
    <property type="entry name" value="PSI"/>
</dbReference>
<dbReference type="InterPro" id="IPR001627">
    <property type="entry name" value="Semap_dom"/>
</dbReference>
<dbReference type="InterPro" id="IPR036352">
    <property type="entry name" value="Semap_dom_sf"/>
</dbReference>
<dbReference type="InterPro" id="IPR001245">
    <property type="entry name" value="Ser-Thr/Tyr_kinase_cat_dom"/>
</dbReference>
<dbReference type="InterPro" id="IPR008266">
    <property type="entry name" value="Tyr_kinase_AS"/>
</dbReference>
<dbReference type="InterPro" id="IPR020635">
    <property type="entry name" value="Tyr_kinase_cat_dom"/>
</dbReference>
<dbReference type="InterPro" id="IPR016244">
    <property type="entry name" value="Tyr_kinase_HGF/MSP_rcpt"/>
</dbReference>
<dbReference type="InterPro" id="IPR015943">
    <property type="entry name" value="WD40/YVTN_repeat-like_dom_sf"/>
</dbReference>
<dbReference type="PANTHER" id="PTHR22625:SF61">
    <property type="entry name" value="HEPATOCYTE GROWTH FACTOR RECEPTOR"/>
    <property type="match status" value="1"/>
</dbReference>
<dbReference type="PANTHER" id="PTHR22625">
    <property type="entry name" value="PLEXIN"/>
    <property type="match status" value="1"/>
</dbReference>
<dbReference type="Pfam" id="PF07714">
    <property type="entry name" value="PK_Tyr_Ser-Thr"/>
    <property type="match status" value="1"/>
</dbReference>
<dbReference type="Pfam" id="PF01437">
    <property type="entry name" value="PSI"/>
    <property type="match status" value="1"/>
</dbReference>
<dbReference type="Pfam" id="PF01403">
    <property type="entry name" value="Sema"/>
    <property type="match status" value="1"/>
</dbReference>
<dbReference type="Pfam" id="PF01833">
    <property type="entry name" value="TIG"/>
    <property type="match status" value="3"/>
</dbReference>
<dbReference type="PIRSF" id="PIRSF000617">
    <property type="entry name" value="TyrPK_HGF-R"/>
    <property type="match status" value="1"/>
</dbReference>
<dbReference type="PRINTS" id="PR00109">
    <property type="entry name" value="TYRKINASE"/>
</dbReference>
<dbReference type="SMART" id="SM00429">
    <property type="entry name" value="IPT"/>
    <property type="match status" value="4"/>
</dbReference>
<dbReference type="SMART" id="SM00423">
    <property type="entry name" value="PSI"/>
    <property type="match status" value="1"/>
</dbReference>
<dbReference type="SMART" id="SM00630">
    <property type="entry name" value="Sema"/>
    <property type="match status" value="1"/>
</dbReference>
<dbReference type="SMART" id="SM00219">
    <property type="entry name" value="TyrKc"/>
    <property type="match status" value="1"/>
</dbReference>
<dbReference type="SUPFAM" id="SSF81296">
    <property type="entry name" value="E set domains"/>
    <property type="match status" value="3"/>
</dbReference>
<dbReference type="SUPFAM" id="SSF103575">
    <property type="entry name" value="Plexin repeat"/>
    <property type="match status" value="1"/>
</dbReference>
<dbReference type="SUPFAM" id="SSF56112">
    <property type="entry name" value="Protein kinase-like (PK-like)"/>
    <property type="match status" value="1"/>
</dbReference>
<dbReference type="SUPFAM" id="SSF101912">
    <property type="entry name" value="Sema domain"/>
    <property type="match status" value="1"/>
</dbReference>
<dbReference type="PROSITE" id="PS00107">
    <property type="entry name" value="PROTEIN_KINASE_ATP"/>
    <property type="match status" value="1"/>
</dbReference>
<dbReference type="PROSITE" id="PS50011">
    <property type="entry name" value="PROTEIN_KINASE_DOM"/>
    <property type="match status" value="1"/>
</dbReference>
<dbReference type="PROSITE" id="PS00109">
    <property type="entry name" value="PROTEIN_KINASE_TYR"/>
    <property type="match status" value="1"/>
</dbReference>
<dbReference type="PROSITE" id="PS51004">
    <property type="entry name" value="SEMA"/>
    <property type="match status" value="1"/>
</dbReference>
<proteinExistence type="inferred from homology"/>
<name>MET_LOXAF</name>
<protein>
    <recommendedName>
        <fullName>Hepatocyte growth factor receptor</fullName>
        <shortName>HGF receptor</shortName>
        <ecNumber>2.7.10.1</ecNumber>
    </recommendedName>
    <alternativeName>
        <fullName>HGF/SF receptor</fullName>
    </alternativeName>
    <alternativeName>
        <fullName>Proto-oncogene c-Met</fullName>
    </alternativeName>
    <alternativeName>
        <fullName>Scatter factor receptor</fullName>
        <shortName>SF receptor</shortName>
    </alternativeName>
    <alternativeName>
        <fullName>Tyrosine-protein kinase Met</fullName>
    </alternativeName>
</protein>
<feature type="signal peptide" evidence="4">
    <location>
        <begin position="1"/>
        <end position="24"/>
    </location>
</feature>
<feature type="chain" id="PRO_0000250465" description="Hepatocyte growth factor receptor">
    <location>
        <begin position="25"/>
        <end position="1382"/>
    </location>
</feature>
<feature type="topological domain" description="Extracellular" evidence="4">
    <location>
        <begin position="25"/>
        <end position="935"/>
    </location>
</feature>
<feature type="transmembrane region" description="Helical" evidence="4">
    <location>
        <begin position="936"/>
        <end position="956"/>
    </location>
</feature>
<feature type="topological domain" description="Cytoplasmic" evidence="4">
    <location>
        <begin position="957"/>
        <end position="1382"/>
    </location>
</feature>
<feature type="domain" description="Sema" evidence="6">
    <location>
        <begin position="27"/>
        <end position="516"/>
    </location>
</feature>
<feature type="domain" description="IPT/TIG 1">
    <location>
        <begin position="564"/>
        <end position="656"/>
    </location>
</feature>
<feature type="domain" description="IPT/TIG 2">
    <location>
        <begin position="658"/>
        <end position="740"/>
    </location>
</feature>
<feature type="domain" description="IPT/TIG 3">
    <location>
        <begin position="743"/>
        <end position="837"/>
    </location>
</feature>
<feature type="domain" description="Protein kinase" evidence="5">
    <location>
        <begin position="1079"/>
        <end position="1346"/>
    </location>
</feature>
<feature type="region of interest" description="Interaction with RANBP9" evidence="1">
    <location>
        <begin position="1213"/>
        <end position="1382"/>
    </location>
</feature>
<feature type="region of interest" description="Interaction with MUC20" evidence="1">
    <location>
        <begin position="1321"/>
        <end position="1360"/>
    </location>
</feature>
<feature type="active site" description="Proton acceptor" evidence="5 7">
    <location>
        <position position="1205"/>
    </location>
</feature>
<feature type="binding site" evidence="5">
    <location>
        <begin position="1085"/>
        <end position="1093"/>
    </location>
    <ligand>
        <name>ATP</name>
        <dbReference type="ChEBI" id="CHEBI:30616"/>
    </ligand>
</feature>
<feature type="binding site" evidence="5">
    <location>
        <position position="1111"/>
    </location>
    <ligand>
        <name>ATP</name>
        <dbReference type="ChEBI" id="CHEBI:30616"/>
    </ligand>
</feature>
<feature type="site" description="Cleavage" evidence="4">
    <location>
        <begin position="308"/>
        <end position="309"/>
    </location>
</feature>
<feature type="modified residue" description="Phosphoserine" evidence="2">
    <location>
        <position position="967"/>
    </location>
</feature>
<feature type="modified residue" description="Phosphothreonine" evidence="2">
    <location>
        <position position="978"/>
    </location>
</feature>
<feature type="modified residue" description="Phosphoserine" evidence="2">
    <location>
        <position position="991"/>
    </location>
</feature>
<feature type="modified residue" description="Phosphoserine" evidence="2">
    <location>
        <position position="998"/>
    </location>
</feature>
<feature type="modified residue" description="Phosphoserine" evidence="2">
    <location>
        <position position="1001"/>
    </location>
</feature>
<feature type="modified residue" description="Phosphotyrosine" evidence="2">
    <location>
        <position position="1004"/>
    </location>
</feature>
<feature type="modified residue" description="Phosphotyrosine" evidence="2">
    <location>
        <position position="1231"/>
    </location>
</feature>
<feature type="modified residue" description="Phosphotyrosine; by autocatalysis" evidence="2">
    <location>
        <position position="1235"/>
    </location>
</feature>
<feature type="modified residue" description="Phosphotyrosine; by autocatalysis" evidence="2">
    <location>
        <position position="1236"/>
    </location>
</feature>
<feature type="modified residue" description="Phosphothreonine" evidence="2">
    <location>
        <position position="1290"/>
    </location>
</feature>
<feature type="modified residue" description="Phosphotyrosine; by autocatalysis" evidence="2">
    <location>
        <position position="1350"/>
    </location>
</feature>
<feature type="modified residue" description="Phosphotyrosine; by autocatalysis" evidence="2">
    <location>
        <position position="1357"/>
    </location>
</feature>
<feature type="modified residue" description="Phosphotyrosine" evidence="2">
    <location>
        <position position="1366"/>
    </location>
</feature>
<feature type="glycosylation site" description="N-linked (GlcNAc...) asparagine" evidence="4">
    <location>
        <position position="45"/>
    </location>
</feature>
<feature type="glycosylation site" description="N-linked (GlcNAc...) asparagine" evidence="4">
    <location>
        <position position="106"/>
    </location>
</feature>
<feature type="glycosylation site" description="N-linked (GlcNAc...) asparagine" evidence="4">
    <location>
        <position position="203"/>
    </location>
</feature>
<feature type="glycosylation site" description="N-linked (GlcNAc...) asparagine" evidence="4">
    <location>
        <position position="359"/>
    </location>
</feature>
<feature type="glycosylation site" description="N-linked (GlcNAc...) asparagine" evidence="4">
    <location>
        <position position="400"/>
    </location>
</feature>
<feature type="glycosylation site" description="N-linked (GlcNAc...) asparagine" evidence="4">
    <location>
        <position position="406"/>
    </location>
</feature>
<feature type="glycosylation site" description="N-linked (GlcNAc...) asparagine" evidence="4">
    <location>
        <position position="450"/>
    </location>
</feature>
<feature type="glycosylation site" description="O-linked (Man) threonine" evidence="2">
    <location>
        <position position="583"/>
    </location>
</feature>
<feature type="glycosylation site" description="N-linked (GlcNAc...) asparagine" evidence="4">
    <location>
        <position position="608"/>
    </location>
</feature>
<feature type="glycosylation site" description="N-linked (GlcNAc...) asparagine" evidence="4">
    <location>
        <position position="636"/>
    </location>
</feature>
<feature type="glycosylation site" description="O-linked (Man) threonine" evidence="2">
    <location>
        <position position="677"/>
    </location>
</feature>
<feature type="glycosylation site" description="N-linked (GlcNAc...) asparagine" evidence="4">
    <location>
        <position position="751"/>
    </location>
</feature>
<feature type="glycosylation site" description="O-linked (Man) threonine" evidence="2">
    <location>
        <position position="762"/>
    </location>
</feature>
<feature type="glycosylation site" description="N-linked (GlcNAc...) asparagine" evidence="4">
    <location>
        <position position="786"/>
    </location>
</feature>
<feature type="glycosylation site" description="N-linked (GlcNAc...) asparagine" evidence="4">
    <location>
        <position position="880"/>
    </location>
</feature>
<feature type="glycosylation site" description="N-linked (GlcNAc...) asparagine" evidence="4">
    <location>
        <position position="931"/>
    </location>
</feature>
<feature type="disulfide bond" evidence="6">
    <location>
        <begin position="95"/>
        <end position="101"/>
    </location>
</feature>
<feature type="disulfide bond" evidence="6">
    <location>
        <begin position="98"/>
        <end position="160"/>
    </location>
</feature>
<feature type="disulfide bond" evidence="6">
    <location>
        <begin position="133"/>
        <end position="141"/>
    </location>
</feature>
<feature type="disulfide bond" evidence="6">
    <location>
        <begin position="173"/>
        <end position="176"/>
    </location>
</feature>
<feature type="disulfide bond" evidence="6">
    <location>
        <begin position="299"/>
        <end position="364"/>
    </location>
</feature>
<feature type="disulfide bond" evidence="6">
    <location>
        <begin position="386"/>
        <end position="398"/>
    </location>
</feature>
<feature type="disulfide bond" evidence="6">
    <location>
        <begin position="521"/>
        <end position="539"/>
    </location>
</feature>
<feature type="disulfide bond" evidence="6">
    <location>
        <begin position="527"/>
        <end position="562"/>
    </location>
</feature>
<feature type="disulfide bond" evidence="6">
    <location>
        <begin position="530"/>
        <end position="546"/>
    </location>
</feature>
<feature type="disulfide bond" evidence="6">
    <location>
        <begin position="542"/>
        <end position="552"/>
    </location>
</feature>
<comment type="function">
    <text evidence="1">Receptor tyrosine kinase that transduces signals from the extracellular matrix into the cytoplasm by binding to hepatocyte growth factor/HGF ligand. Regulates many physiological processes including proliferation, scattering, morphogenesis and survival. Ligand binding at the cell surface induces autophosphorylation of MET on its intracellular domain that provides docking sites for downstream signaling molecules. Following activation by ligand, interacts with the PI3-kinase subunit PIK3R1, PLCG1, SRC, GRB2, STAT3 or the adapter GAB1. Recruitment of these downstream effectors by MET leads to the activation of several signaling cascades including the RAS-ERK, PI3 kinase-AKT, or PLCgamma-PKC. The RAS-ERK activation is associated with the morphogenetic effects while PI3K/AKT coordinates prosurvival effects. During embryonic development, MET signaling plays a role in gastrulation, development and migration of muscles and neuronal precursors, angiogenesis and kidney formation. In adults, participates in wound healing as well as organ regeneration and tissue remodeling. Also promotes differentiation and proliferation of hematopoietic cells (By similarity).</text>
</comment>
<comment type="catalytic activity">
    <reaction evidence="7">
        <text>L-tyrosyl-[protein] + ATP = O-phospho-L-tyrosyl-[protein] + ADP + H(+)</text>
        <dbReference type="Rhea" id="RHEA:10596"/>
        <dbReference type="Rhea" id="RHEA-COMP:10136"/>
        <dbReference type="Rhea" id="RHEA-COMP:20101"/>
        <dbReference type="ChEBI" id="CHEBI:15378"/>
        <dbReference type="ChEBI" id="CHEBI:30616"/>
        <dbReference type="ChEBI" id="CHEBI:46858"/>
        <dbReference type="ChEBI" id="CHEBI:61978"/>
        <dbReference type="ChEBI" id="CHEBI:456216"/>
        <dbReference type="EC" id="2.7.10.1"/>
    </reaction>
</comment>
<comment type="activity regulation">
    <text evidence="1">In its inactive state, the C-terminal tail interacts with the catalytic domain and inhibits the kinase activity. Upon ligand binding, the C-terminal tail is displaced and becomes phosphorylated, thus increasing the kinase activity (By similarity).</text>
</comment>
<comment type="subunit">
    <text evidence="2 3">Heterodimer made of an alpha chain (50 kDa) and a beta chain (145 kDa) which are disulfide linked. Binds PLXNB1. Interacts when phosphorylated with downstream effectors including STAT3, PIK3R1, SRC, PCLG1, GRB2 and GAB1. Interacts with SPSB1, SPSB2 and SPSB4. Interacts with INPP5D/SHIP1. When phosphorylated at Tyr-1357, interacts with INPPL1/SHIP2. Interacts with RANBP9 and RANBP10, as well as SPSB1, SPSB2, SPSB3 and SPSB4. SPSB1 binding occurs in the presence and in the absence of HGF, however HGF treatment has a positive effect on this interaction. Interacts with MUC20; prevents interaction with GRB2 and suppresses hepatocyte growth factor-induced cell proliferation. Interacts with GRB10. Interacts with PTPN1 and PTPN2. Interacts with HSP90AA1 and HSP90AB1; the interaction suppresses MET kinase activity. Interacts with tensin TNS3 (By similarity). Interacts (when phosphorylated) with tensin TNS4 (via SH2 domain); the interaction increases MET protein stability by inhibiting MET endocytosis and subsequent lysosomal degradation (By similarity).</text>
</comment>
<comment type="subcellular location">
    <subcellularLocation>
        <location evidence="1">Membrane</location>
        <topology evidence="1">Single-pass type I membrane protein</topology>
    </subcellularLocation>
</comment>
<comment type="domain">
    <text evidence="1">The kinase domain is involved in SPSB1 binding.</text>
</comment>
<comment type="domain">
    <text evidence="1">The beta-propeller Sema domain mediates binding to HGF.</text>
</comment>
<comment type="PTM">
    <text evidence="2">Autophosphorylated in response to ligand binding on Tyr-1235 and Tyr-1236 in the kinase domain leading to further phosphorylation of Tyr-1350 and Tyr-1357 in the C-terminal multifunctional docking site. Dephosphorylated by PTPRJ at Tyr-1350 and Tyr-1366. Dephosphorylated by PTPN1 and PTPN2 (By similarity).</text>
</comment>
<comment type="PTM">
    <text evidence="2">Ubiquitinated. Ubiquitination by CBL regulates the receptor stability and activity through proteasomal degradation (By similarity).</text>
</comment>
<comment type="PTM">
    <text evidence="2">O-mannosylation of IPT/TIG domains by TMEM260 is required for protein maturation. O-mannosylated residues are composed of single mannose glycans that are not elongated or modified.</text>
</comment>
<comment type="similarity">
    <text evidence="5">Belongs to the protein kinase superfamily. Tyr protein kinase family.</text>
</comment>
<reference key="1">
    <citation type="submission" date="2006-07" db="EMBL/GenBank/DDBJ databases">
        <title>NISC comparative sequencing initiative.</title>
        <authorList>
            <person name="Antonellis A."/>
            <person name="Ayele K."/>
            <person name="Benjamin B."/>
            <person name="Blakesley R.W."/>
            <person name="Boakye A."/>
            <person name="Bouffard G.G."/>
            <person name="Brinkley C."/>
            <person name="Brooks S."/>
            <person name="Chu G."/>
            <person name="Coleman H."/>
            <person name="Engle J."/>
            <person name="Gestole M."/>
            <person name="Greene A."/>
            <person name="Guan X."/>
            <person name="Gupta J."/>
            <person name="Haghighi P."/>
            <person name="Han J."/>
            <person name="Hansen N."/>
            <person name="Ho S.-L."/>
            <person name="Hu P."/>
            <person name="Hunter G."/>
            <person name="Hurle B."/>
            <person name="Idol J.R."/>
            <person name="Kwong P."/>
            <person name="Laric P."/>
            <person name="Larson S."/>
            <person name="Lee-Lin S.-Q."/>
            <person name="Legaspi R."/>
            <person name="Madden M."/>
            <person name="Maduro Q.L."/>
            <person name="Maduro V.B."/>
            <person name="Margulies E.H."/>
            <person name="Masiello C."/>
            <person name="Maskeri B."/>
            <person name="McDowell J."/>
            <person name="Mojidi H.A."/>
            <person name="Mullikin J.C."/>
            <person name="Oestreicher J.S."/>
            <person name="Park M."/>
            <person name="Portnoy M.E."/>
            <person name="Prasad A."/>
            <person name="Puri O."/>
            <person name="Reddix-Dugue N."/>
            <person name="Schandler K."/>
            <person name="Schueler M.G."/>
            <person name="Sison C."/>
            <person name="Stantripop S."/>
            <person name="Stephen E."/>
            <person name="Taye A."/>
            <person name="Thomas J.W."/>
            <person name="Thomas P.J."/>
            <person name="Tsipouri V."/>
            <person name="Ung L."/>
            <person name="Vogt J.L."/>
            <person name="Wetherby K.D."/>
            <person name="Young A."/>
            <person name="Green E.D."/>
        </authorList>
    </citation>
    <scope>NUCLEOTIDE SEQUENCE [LARGE SCALE GENOMIC DNA]</scope>
</reference>
<sequence length="1382" mass="154684">MKAPAVLAPGVLVLLFTLVRKSHGECEEALAKSKMNVNMKYQLPNFTADTPIQNVVLHEHHIFLGAINNIYVLNDKDLQKVAEYKTGPVLEHPDCLPCQDCSSKANLSGSVWKDNINMALLVDTYYDDQLITCGSVNRGTCQRHVLPPDNPADIHSKVHCMYSPQADEEPSKCPDCVVSALGTKVLLTEKDRFINFFVGNTVNSSYLPDHSLHSISVRRLKETQDGFKFLTDQSYIDVLPEFRDSYPIKYVHAFKHNQFIYFLTVQRETLESQTFHTRIIRFCSVDSGLHSYMEMPLECILTEKRRKRSAREEVFNILQAAYVSKPGAYLAKQIGALPDDDILYGVFAQSKLDSAEPMNRSAVCAFPIKYVNDFFNKIVNKNNVRCLQHFYGPNHEHCFNRTLLRNSSGCEVRRDEYRTEFTTALQRVDLFTGQFNQVLLTSISTFIKGNLTIANLGTSEGRFMQVVVSRSGLTTPHVNFRLDSHAVSPEVILEHPLNQNGYTLVITGKKITKIPLDGLGCDHFQSCSQCLSAPSFVQCGWCHNKCARAEECPNGMWTQEICLPTIYEVFPTSAPLEGGTTLTVCGWDFGFRRNNKFDLKKTRVLIGNDSCTLTLSESTTNTLKCTVGPAMNKHFNLSIIISNGRGTARYRTFSYVEPVITSISPSYGPKAGGTLVTLTGKYLNSGNSRHISIGGKTCTLKSVSDSVLECYTPAQSISTDFPVKLKIDLANREAYSFSYQEDPTVYEIHPNKSFISGGSTITGIGKNLNSVSVPRMVINVQEAGRNFTVACQHRSNSEIICCTTPSLQQLNLQLPLKTKAFFMLDGIHSNYFDLIYVHNPVFKPFKKPVMISMGNENVLEIKGDYIDPEAVKGEVLKVGNKSCENIHLQSEAVLCTVPNDLLKLNSELNIEWKQAVSSTVLGKVIVQPDQNFTGLIVGVVSISIILLLLLGLFLWLKKRKQIKDLGSELVRYDARVHTPHLDRLVSARSVSPTTEMVSNESVDYRATFPEDQFPNSSQNGSCRQVQYPLTDMSPILTNGDSDSSIPLLQNNVHIDLSALNPELVQAVQHVVIGPSSLIVHFNEVIGRGHFGCVYHGTLLDNGDKKIHCAVKSLNRITDIGEVSQFLTEGIIMKDFSHPNVLSLLGICLRSEGSPLVVLPYMKHGDLRNFIRNETHNPTVKDLIGFGLQVAKGMKYLASKKFVHRDLAARNCMLDEKFTVKVADFGLARDVYDKEYYSVHNKTGAKLPVKWMALESLQTQKFTTKSDVWSFGVLLWELMTRGAPPYPDVNTFDITVYLLQGRRLLQPEYCPDPLYEVMLKCWHPKAEMRPSFSELVSRISAIFSTFIGEHYVHVNTTYVNVKCVAPYPSLLSSQDSVDDEVDT</sequence>